<protein>
    <recommendedName>
        <fullName>Uncharacterized protein MK0932</fullName>
    </recommendedName>
</protein>
<proteinExistence type="predicted"/>
<sequence>MSQSVLIVDALGAGKGWRTRSRDVIGAGPRTVASLLESDYEVSLITYEDLQKLGLDSVMDYDTVGVSIMTGDERAARRMFDHTRSRTFRFIGGPGAADPNALLKTGADAAVIGEAEETLPELLEERGPVRGVYFRRGTEVDFPGPRPISRRFTRVNPEYIRAYAHRWAARVYVEIVRGCSNSCRTTFELPDGRKCSGCGNCREGEGGERWECPEGIPPGCGFCSVPSIFGPTRSRPLNEVVREVRGLVREGIRRVVLSASDVLDYGRGDLLTDPRTPPPNVEALRRLLRRTSKHVDVLFVENVKACLLNREIAELLGEYCRGTSVSVGVETGDPRLLRAIGKPSTLKEALRAIRLLRRAGLRPHAYFVYGLPGQTMKSAKLTAKAMKRAVEMGAEKITVYRFRPIPASAFGDFPPGPSPRNDEASRLIADTARRLNEALKRRMIGKRIRVYVAEPDLRRPRDAIGWPVKGGPKVRLKGARELVGTECEVEITGVVSDKVVSGKVVRILEEIDVEALEGRGVPG</sequence>
<comment type="cofactor">
    <cofactor evidence="1">
        <name>[4Fe-4S] cluster</name>
        <dbReference type="ChEBI" id="CHEBI:49883"/>
    </cofactor>
</comment>
<reference key="1">
    <citation type="journal article" date="2002" name="Proc. Natl. Acad. Sci. U.S.A.">
        <title>The complete genome of hyperthermophile Methanopyrus kandleri AV19 and monophyly of archaeal methanogens.</title>
        <authorList>
            <person name="Slesarev A.I."/>
            <person name="Mezhevaya K.V."/>
            <person name="Makarova K.S."/>
            <person name="Polushin N.N."/>
            <person name="Shcherbinina O.V."/>
            <person name="Shakhova V.V."/>
            <person name="Belova G.I."/>
            <person name="Aravind L."/>
            <person name="Natale D.A."/>
            <person name="Rogozin I.B."/>
            <person name="Tatusov R.L."/>
            <person name="Wolf Y.I."/>
            <person name="Stetter K.O."/>
            <person name="Malykh A.G."/>
            <person name="Koonin E.V."/>
            <person name="Kozyavkin S.A."/>
        </authorList>
    </citation>
    <scope>NUCLEOTIDE SEQUENCE [LARGE SCALE GENOMIC DNA]</scope>
    <source>
        <strain>AV19 / DSM 6324 / JCM 9639 / NBRC 100938</strain>
    </source>
</reference>
<organism>
    <name type="scientific">Methanopyrus kandleri (strain AV19 / DSM 6324 / JCM 9639 / NBRC 100938)</name>
    <dbReference type="NCBI Taxonomy" id="190192"/>
    <lineage>
        <taxon>Archaea</taxon>
        <taxon>Methanobacteriati</taxon>
        <taxon>Methanobacteriota</taxon>
        <taxon>Methanomada group</taxon>
        <taxon>Methanopyri</taxon>
        <taxon>Methanopyrales</taxon>
        <taxon>Methanopyraceae</taxon>
        <taxon>Methanopyrus</taxon>
    </lineage>
</organism>
<accession>Q8TWU9</accession>
<name>Y932_METKA</name>
<dbReference type="EMBL" id="AE009439">
    <property type="protein sequence ID" value="AAM02145.1"/>
    <property type="molecule type" value="Genomic_DNA"/>
</dbReference>
<dbReference type="RefSeq" id="WP_011019300.1">
    <property type="nucleotide sequence ID" value="NC_003551.1"/>
</dbReference>
<dbReference type="SMR" id="Q8TWU9"/>
<dbReference type="STRING" id="190192.MK0932"/>
<dbReference type="PaxDb" id="190192-MK0932"/>
<dbReference type="EnsemblBacteria" id="AAM02145">
    <property type="protein sequence ID" value="AAM02145"/>
    <property type="gene ID" value="MK0932"/>
</dbReference>
<dbReference type="GeneID" id="1477033"/>
<dbReference type="KEGG" id="mka:MK0932"/>
<dbReference type="PATRIC" id="fig|190192.8.peg.975"/>
<dbReference type="HOGENOM" id="CLU_508670_0_0_2"/>
<dbReference type="InParanoid" id="Q8TWU9"/>
<dbReference type="OrthoDB" id="2305at2157"/>
<dbReference type="Proteomes" id="UP000001826">
    <property type="component" value="Chromosome"/>
</dbReference>
<dbReference type="GO" id="GO:0051539">
    <property type="term" value="F:4 iron, 4 sulfur cluster binding"/>
    <property type="evidence" value="ECO:0007669"/>
    <property type="project" value="UniProtKB-KW"/>
</dbReference>
<dbReference type="GO" id="GO:0003824">
    <property type="term" value="F:catalytic activity"/>
    <property type="evidence" value="ECO:0007669"/>
    <property type="project" value="InterPro"/>
</dbReference>
<dbReference type="GO" id="GO:0046872">
    <property type="term" value="F:metal ion binding"/>
    <property type="evidence" value="ECO:0007669"/>
    <property type="project" value="UniProtKB-KW"/>
</dbReference>
<dbReference type="CDD" id="cd01335">
    <property type="entry name" value="Radical_SAM"/>
    <property type="match status" value="1"/>
</dbReference>
<dbReference type="Gene3D" id="3.40.50.280">
    <property type="entry name" value="Cobalamin-binding domain"/>
    <property type="match status" value="1"/>
</dbReference>
<dbReference type="Gene3D" id="3.80.30.20">
    <property type="entry name" value="tm_1862 like domain"/>
    <property type="match status" value="1"/>
</dbReference>
<dbReference type="InterPro" id="IPR006638">
    <property type="entry name" value="Elp3/MiaA/NifB-like_rSAM"/>
</dbReference>
<dbReference type="InterPro" id="IPR007197">
    <property type="entry name" value="rSAM"/>
</dbReference>
<dbReference type="InterPro" id="IPR023404">
    <property type="entry name" value="rSAM_horseshoe"/>
</dbReference>
<dbReference type="InterPro" id="IPR051198">
    <property type="entry name" value="Tetrapyrrole_Bchl_Biosynth_MTs"/>
</dbReference>
<dbReference type="PANTHER" id="PTHR43409">
    <property type="entry name" value="ANAEROBIC MAGNESIUM-PROTOPORPHYRIN IX MONOMETHYL ESTER CYCLASE-RELATED"/>
    <property type="match status" value="1"/>
</dbReference>
<dbReference type="PANTHER" id="PTHR43409:SF17">
    <property type="entry name" value="METHYLTHIOTRANSFERASE MJ0865-RELATED"/>
    <property type="match status" value="1"/>
</dbReference>
<dbReference type="Pfam" id="PF04055">
    <property type="entry name" value="Radical_SAM"/>
    <property type="match status" value="1"/>
</dbReference>
<dbReference type="SFLD" id="SFLDS00029">
    <property type="entry name" value="Radical_SAM"/>
    <property type="match status" value="1"/>
</dbReference>
<dbReference type="SMART" id="SM00729">
    <property type="entry name" value="Elp3"/>
    <property type="match status" value="1"/>
</dbReference>
<dbReference type="SUPFAM" id="SSF102114">
    <property type="entry name" value="Radical SAM enzymes"/>
    <property type="match status" value="1"/>
</dbReference>
<dbReference type="PROSITE" id="PS51918">
    <property type="entry name" value="RADICAL_SAM"/>
    <property type="match status" value="1"/>
</dbReference>
<gene>
    <name type="ordered locus">MK0932</name>
</gene>
<keyword id="KW-0004">4Fe-4S</keyword>
<keyword id="KW-0408">Iron</keyword>
<keyword id="KW-0411">Iron-sulfur</keyword>
<keyword id="KW-0479">Metal-binding</keyword>
<keyword id="KW-1185">Reference proteome</keyword>
<keyword id="KW-0949">S-adenosyl-L-methionine</keyword>
<evidence type="ECO:0000255" key="1">
    <source>
        <dbReference type="PROSITE-ProRule" id="PRU01266"/>
    </source>
</evidence>
<feature type="chain" id="PRO_0000107442" description="Uncharacterized protein MK0932">
    <location>
        <begin position="1"/>
        <end position="523"/>
    </location>
</feature>
<feature type="domain" description="Radical SAM core" evidence="1">
    <location>
        <begin position="193"/>
        <end position="447"/>
    </location>
</feature>
<feature type="binding site" evidence="1">
    <location>
        <position position="212"/>
    </location>
    <ligand>
        <name>[4Fe-4S] cluster</name>
        <dbReference type="ChEBI" id="CHEBI:49883"/>
        <note>4Fe-4S-S-AdoMet</note>
    </ligand>
</feature>
<feature type="binding site" evidence="1">
    <location>
        <position position="220"/>
    </location>
    <ligand>
        <name>[4Fe-4S] cluster</name>
        <dbReference type="ChEBI" id="CHEBI:49883"/>
        <note>4Fe-4S-S-AdoMet</note>
    </ligand>
</feature>
<feature type="binding site" evidence="1">
    <location>
        <position position="223"/>
    </location>
    <ligand>
        <name>[4Fe-4S] cluster</name>
        <dbReference type="ChEBI" id="CHEBI:49883"/>
        <note>4Fe-4S-S-AdoMet</note>
    </ligand>
</feature>